<feature type="chain" id="PRO_0000194863" description="COP9 signalosome complex subunit 6">
    <location>
        <begin position="1"/>
        <end position="426"/>
    </location>
</feature>
<feature type="domain" description="MPN" evidence="1">
    <location>
        <begin position="14"/>
        <end position="155"/>
    </location>
</feature>
<feature type="region of interest" description="Disordered" evidence="2">
    <location>
        <begin position="320"/>
        <end position="426"/>
    </location>
</feature>
<feature type="compositionally biased region" description="Acidic residues" evidence="2">
    <location>
        <begin position="334"/>
        <end position="347"/>
    </location>
</feature>
<accession>Q95PZ0</accession>
<reference key="1">
    <citation type="journal article" date="1998" name="Science">
        <title>Genome sequence of the nematode C. elegans: a platform for investigating biology.</title>
        <authorList>
            <consortium name="The C. elegans sequencing consortium"/>
        </authorList>
    </citation>
    <scope>NUCLEOTIDE SEQUENCE [LARGE SCALE GENOMIC DNA]</scope>
    <source>
        <strain>Bristol N2</strain>
    </source>
</reference>
<reference key="2">
    <citation type="journal article" date="2003" name="Curr. Biol.">
        <title>Neddylation and deneddylation of CUL-3 is required to target MEI-1/katanin for degradation at the meiosis-to-mitosis transition in C. elegans.</title>
        <authorList>
            <person name="Pintard L."/>
            <person name="Kurz T."/>
            <person name="Glaser S."/>
            <person name="Willis J.H."/>
            <person name="Peter M."/>
            <person name="Bowerman B."/>
        </authorList>
    </citation>
    <scope>FUNCTION</scope>
    <scope>SUBCELLULAR LOCATION</scope>
    <scope>INTERACTION WITH RBX-1; CSN-2 AND CSN-4</scope>
</reference>
<evidence type="ECO:0000255" key="1">
    <source>
        <dbReference type="PROSITE-ProRule" id="PRU01182"/>
    </source>
</evidence>
<evidence type="ECO:0000256" key="2">
    <source>
        <dbReference type="SAM" id="MobiDB-lite"/>
    </source>
</evidence>
<evidence type="ECO:0000269" key="3">
    <source>
    </source>
</evidence>
<evidence type="ECO:0000305" key="4"/>
<comment type="function">
    <text evidence="3">Component of the COP9 signalosome complex (CSN), a complex involved in various cellular and developmental processes. The CSN complex is an essential regulator of the ubiquitin (Ubl) conjugation pathway by mediating the deneddylation of the cullin subunits of the SCF-type E3 ligase complexes, leading to decrease the Ubl ligase activity of SCF. The CSN complex plays an essential role in embryogenesis and oogenesis and is required to regulate microtubule stability in the early embryo. Mediates mei-3/katanin targeting for degradation at the meiosis to mitosis transition via deneddylation of cul-3.</text>
</comment>
<comment type="subunit">
    <text evidence="3">Component of the CSN complex, probably composed of csn-1, csn-2, csn-3, csn-4, csn-5, csn-6 and csn-7. Within the complex it probably interacts directly with csn-2 and csn-4. Interacts with rbx-1.</text>
</comment>
<comment type="subcellular location">
    <subcellularLocation>
        <location evidence="3">Cytoplasm</location>
    </subcellularLocation>
    <subcellularLocation>
        <location evidence="3">Nucleus</location>
    </subcellularLocation>
</comment>
<comment type="miscellaneous">
    <text>Although strongly related to metalloprotease proteins, it lacks the JAMM motif that probably constitutes the catalytic center. Its function as protease is therefore unsure.</text>
</comment>
<comment type="similarity">
    <text evidence="4">Belongs to the peptidase M67A family. CSN6 subfamily.</text>
</comment>
<gene>
    <name type="primary">csn-6</name>
    <name type="ORF">Y67H2A.6</name>
</gene>
<name>CSN6_CAEEL</name>
<keyword id="KW-0963">Cytoplasm</keyword>
<keyword id="KW-0217">Developmental protein</keyword>
<keyword id="KW-0221">Differentiation</keyword>
<keyword id="KW-0539">Nucleus</keyword>
<keyword id="KW-0896">Oogenesis</keyword>
<keyword id="KW-1185">Reference proteome</keyword>
<keyword id="KW-0736">Signalosome</keyword>
<proteinExistence type="evidence at protein level"/>
<dbReference type="EMBL" id="AL132951">
    <property type="protein sequence ID" value="CAC44307.1"/>
    <property type="molecule type" value="Genomic_DNA"/>
</dbReference>
<dbReference type="RefSeq" id="NP_001255726.1">
    <property type="nucleotide sequence ID" value="NM_001268797.3"/>
</dbReference>
<dbReference type="SMR" id="Q95PZ0"/>
<dbReference type="BioGRID" id="43378">
    <property type="interactions" value="9"/>
</dbReference>
<dbReference type="ComplexPortal" id="CPX-3386">
    <property type="entry name" value="COP9 signalosome complex"/>
</dbReference>
<dbReference type="DIP" id="DIP-27463N"/>
<dbReference type="FunCoup" id="Q95PZ0">
    <property type="interactions" value="2398"/>
</dbReference>
<dbReference type="IntAct" id="Q95PZ0">
    <property type="interactions" value="3"/>
</dbReference>
<dbReference type="STRING" id="6239.Y67H2A.6b.1"/>
<dbReference type="iPTMnet" id="Q95PZ0"/>
<dbReference type="PaxDb" id="6239-Y67H2A.6b"/>
<dbReference type="PeptideAtlas" id="Q95PZ0"/>
<dbReference type="EnsemblMetazoa" id="Y67H2A.6a.1">
    <property type="protein sequence ID" value="Y67H2A.6a.1"/>
    <property type="gene ID" value="WBGene00000818"/>
</dbReference>
<dbReference type="GeneID" id="178289"/>
<dbReference type="KEGG" id="cel:CELE_Y67H2A.6"/>
<dbReference type="UCSC" id="Y67H2A.6">
    <property type="organism name" value="c. elegans"/>
</dbReference>
<dbReference type="AGR" id="WB:WBGene00000818"/>
<dbReference type="CTD" id="178289"/>
<dbReference type="WormBase" id="Y67H2A.6a">
    <property type="protein sequence ID" value="CE28377"/>
    <property type="gene ID" value="WBGene00000818"/>
    <property type="gene designation" value="csn-6"/>
</dbReference>
<dbReference type="eggNOG" id="KOG3050">
    <property type="taxonomic scope" value="Eukaryota"/>
</dbReference>
<dbReference type="GeneTree" id="ENSGT00950000183073"/>
<dbReference type="HOGENOM" id="CLU_633450_0_0_1"/>
<dbReference type="InParanoid" id="Q95PZ0"/>
<dbReference type="OrthoDB" id="1378at2759"/>
<dbReference type="PhylomeDB" id="Q95PZ0"/>
<dbReference type="Reactome" id="R-CEL-5696394">
    <property type="pathway name" value="DNA Damage Recognition in GG-NER"/>
</dbReference>
<dbReference type="Reactome" id="R-CEL-6781823">
    <property type="pathway name" value="Formation of TC-NER Pre-Incision Complex"/>
</dbReference>
<dbReference type="Reactome" id="R-CEL-8856825">
    <property type="pathway name" value="Cargo recognition for clathrin-mediated endocytosis"/>
</dbReference>
<dbReference type="Reactome" id="R-CEL-8951664">
    <property type="pathway name" value="Neddylation"/>
</dbReference>
<dbReference type="PRO" id="PR:Q95PZ0"/>
<dbReference type="Proteomes" id="UP000001940">
    <property type="component" value="Chromosome IV"/>
</dbReference>
<dbReference type="Bgee" id="WBGene00000818">
    <property type="expression patterns" value="Expressed in germ line (C elegans) and 4 other cell types or tissues"/>
</dbReference>
<dbReference type="ExpressionAtlas" id="Q95PZ0">
    <property type="expression patterns" value="baseline and differential"/>
</dbReference>
<dbReference type="GO" id="GO:0008180">
    <property type="term" value="C:COP9 signalosome"/>
    <property type="evidence" value="ECO:0000353"/>
    <property type="project" value="ComplexPortal"/>
</dbReference>
<dbReference type="GO" id="GO:0005737">
    <property type="term" value="C:cytoplasm"/>
    <property type="evidence" value="ECO:0000303"/>
    <property type="project" value="ComplexPortal"/>
</dbReference>
<dbReference type="GO" id="GO:0005634">
    <property type="term" value="C:nucleus"/>
    <property type="evidence" value="ECO:0000303"/>
    <property type="project" value="ComplexPortal"/>
</dbReference>
<dbReference type="GO" id="GO:0008237">
    <property type="term" value="F:metallopeptidase activity"/>
    <property type="evidence" value="ECO:0007669"/>
    <property type="project" value="InterPro"/>
</dbReference>
<dbReference type="GO" id="GO:0060184">
    <property type="term" value="P:cell cycle switching"/>
    <property type="evidence" value="ECO:0000315"/>
    <property type="project" value="ComplexPortal"/>
</dbReference>
<dbReference type="GO" id="GO:0048477">
    <property type="term" value="P:oogenesis"/>
    <property type="evidence" value="ECO:0007669"/>
    <property type="project" value="UniProtKB-KW"/>
</dbReference>
<dbReference type="GO" id="GO:1905879">
    <property type="term" value="P:regulation of oogenesis"/>
    <property type="evidence" value="ECO:0000315"/>
    <property type="project" value="ComplexPortal"/>
</dbReference>
<dbReference type="Gene3D" id="3.40.140.10">
    <property type="entry name" value="Cytidine Deaminase, domain 2"/>
    <property type="match status" value="1"/>
</dbReference>
<dbReference type="InterPro" id="IPR024969">
    <property type="entry name" value="EIF3F/CSN6-like_C"/>
</dbReference>
<dbReference type="InterPro" id="IPR000555">
    <property type="entry name" value="JAMM/MPN+_dom"/>
</dbReference>
<dbReference type="InterPro" id="IPR037518">
    <property type="entry name" value="MPN"/>
</dbReference>
<dbReference type="PANTHER" id="PTHR10540:SF8">
    <property type="entry name" value="COP9 SIGNALOSOME COMPLEX SUBUNIT 6"/>
    <property type="match status" value="1"/>
</dbReference>
<dbReference type="PANTHER" id="PTHR10540">
    <property type="entry name" value="EUKARYOTIC TRANSLATION INITIATION FACTOR 3 SUBUNIT F-RELATED"/>
    <property type="match status" value="1"/>
</dbReference>
<dbReference type="Pfam" id="PF01398">
    <property type="entry name" value="JAB"/>
    <property type="match status" value="1"/>
</dbReference>
<dbReference type="Pfam" id="PF13012">
    <property type="entry name" value="MitMem_reg"/>
    <property type="match status" value="1"/>
</dbReference>
<dbReference type="PROSITE" id="PS50249">
    <property type="entry name" value="MPN"/>
    <property type="match status" value="1"/>
</dbReference>
<sequence>MALNAPSGSCSSKVLLHPLVIMQMSEHYSRTKVQQGPTVKKVFGAILGRQNGRQVEAINSFVLKMETEEMAEPVTFSTEHLLQRADQYLEVFPELQVIGLYCAGEDDNLTPEEKPLLSKLTNAVRNSEKAGQIDATLFLKLNSITAGTTRKLPLFAFEADVTDQEKHKPIEWILVSEESERVGVNHIAKLSTKHGKDGKSVGKKHAEAQDAAMSMLQNRVDLIVAYLEKVQDGTLQPNFEILKEANLLAQKLKTIDRYAAEFTDSFEKEEKTMTVFSLMPRLTTLLGNMQNVWNKLSAQRADLLADDGFHGKSTSRWAHPVRFKSQHLGRPQQADDDDYFDDEDLENDMSGPRRKIHAADSPAGSRRRRVPPRAMNFLGRNSGMQAATDEMELSGQEENMGSNYIPDVPRPSATAHNESDESSQAS</sequence>
<protein>
    <recommendedName>
        <fullName>COP9 signalosome complex subunit 6</fullName>
        <shortName>Signalosome subunit 6</shortName>
    </recommendedName>
</protein>
<organism>
    <name type="scientific">Caenorhabditis elegans</name>
    <dbReference type="NCBI Taxonomy" id="6239"/>
    <lineage>
        <taxon>Eukaryota</taxon>
        <taxon>Metazoa</taxon>
        <taxon>Ecdysozoa</taxon>
        <taxon>Nematoda</taxon>
        <taxon>Chromadorea</taxon>
        <taxon>Rhabditida</taxon>
        <taxon>Rhabditina</taxon>
        <taxon>Rhabditomorpha</taxon>
        <taxon>Rhabditoidea</taxon>
        <taxon>Rhabditidae</taxon>
        <taxon>Peloderinae</taxon>
        <taxon>Caenorhabditis</taxon>
    </lineage>
</organism>